<protein>
    <recommendedName>
        <fullName evidence="1">DNA-directed RNA polymerase subunit beta''</fullName>
        <ecNumber evidence="1">2.7.7.6</ecNumber>
    </recommendedName>
    <alternativeName>
        <fullName evidence="1">PEP</fullName>
    </alternativeName>
    <alternativeName>
        <fullName evidence="1">Plastid-encoded RNA polymerase subunit beta''</fullName>
        <shortName evidence="1">RNA polymerase subunit beta''</shortName>
    </alternativeName>
</protein>
<proteinExistence type="inferred from homology"/>
<comment type="function">
    <text evidence="1">DNA-dependent RNA polymerase catalyzes the transcription of DNA into RNA using the four ribonucleoside triphosphates as substrates.</text>
</comment>
<comment type="catalytic activity">
    <reaction evidence="1">
        <text>RNA(n) + a ribonucleoside 5'-triphosphate = RNA(n+1) + diphosphate</text>
        <dbReference type="Rhea" id="RHEA:21248"/>
        <dbReference type="Rhea" id="RHEA-COMP:14527"/>
        <dbReference type="Rhea" id="RHEA-COMP:17342"/>
        <dbReference type="ChEBI" id="CHEBI:33019"/>
        <dbReference type="ChEBI" id="CHEBI:61557"/>
        <dbReference type="ChEBI" id="CHEBI:140395"/>
        <dbReference type="EC" id="2.7.7.6"/>
    </reaction>
</comment>
<comment type="cofactor">
    <cofactor evidence="1">
        <name>Zn(2+)</name>
        <dbReference type="ChEBI" id="CHEBI:29105"/>
    </cofactor>
    <text evidence="1">Binds 1 Zn(2+) ion per subunit.</text>
</comment>
<comment type="subunit">
    <text evidence="1">In plastids the minimal PEP RNA polymerase catalytic core is composed of four subunits: alpha, beta, beta', and beta''. When a (nuclear-encoded) sigma factor is associated with the core the holoenzyme is formed, which can initiate transcription.</text>
</comment>
<comment type="subcellular location">
    <subcellularLocation>
        <location evidence="1">Plastid</location>
        <location evidence="1">Chloroplast</location>
    </subcellularLocation>
</comment>
<comment type="similarity">
    <text evidence="1">Belongs to the RNA polymerase beta' chain family. RpoC2 subfamily.</text>
</comment>
<feature type="chain" id="PRO_0000353555" description="DNA-directed RNA polymerase subunit beta''">
    <location>
        <begin position="1"/>
        <end position="1212"/>
    </location>
</feature>
<feature type="region of interest" description="Disordered" evidence="2">
    <location>
        <begin position="1162"/>
        <end position="1212"/>
    </location>
</feature>
<feature type="binding site" evidence="1">
    <location>
        <position position="229"/>
    </location>
    <ligand>
        <name>Zn(2+)</name>
        <dbReference type="ChEBI" id="CHEBI:29105"/>
    </ligand>
</feature>
<feature type="binding site" evidence="1">
    <location>
        <position position="302"/>
    </location>
    <ligand>
        <name>Zn(2+)</name>
        <dbReference type="ChEBI" id="CHEBI:29105"/>
    </ligand>
</feature>
<feature type="binding site" evidence="1">
    <location>
        <position position="309"/>
    </location>
    <ligand>
        <name>Zn(2+)</name>
        <dbReference type="ChEBI" id="CHEBI:29105"/>
    </ligand>
</feature>
<feature type="binding site" evidence="1">
    <location>
        <position position="312"/>
    </location>
    <ligand>
        <name>Zn(2+)</name>
        <dbReference type="ChEBI" id="CHEBI:29105"/>
    </ligand>
</feature>
<organism>
    <name type="scientific">Cryptomeria japonica</name>
    <name type="common">Japanese cedar</name>
    <name type="synonym">Cupressus japonica</name>
    <dbReference type="NCBI Taxonomy" id="3369"/>
    <lineage>
        <taxon>Eukaryota</taxon>
        <taxon>Viridiplantae</taxon>
        <taxon>Streptophyta</taxon>
        <taxon>Embryophyta</taxon>
        <taxon>Tracheophyta</taxon>
        <taxon>Spermatophyta</taxon>
        <taxon>Pinopsida</taxon>
        <taxon>Pinidae</taxon>
        <taxon>Conifers II</taxon>
        <taxon>Cupressales</taxon>
        <taxon>Cupressaceae</taxon>
        <taxon>Cryptomeria</taxon>
    </lineage>
</organism>
<keyword id="KW-0150">Chloroplast</keyword>
<keyword id="KW-0240">DNA-directed RNA polymerase</keyword>
<keyword id="KW-0479">Metal-binding</keyword>
<keyword id="KW-0548">Nucleotidyltransferase</keyword>
<keyword id="KW-0934">Plastid</keyword>
<keyword id="KW-0804">Transcription</keyword>
<keyword id="KW-0808">Transferase</keyword>
<keyword id="KW-0862">Zinc</keyword>
<geneLocation type="chloroplast"/>
<accession>B1VKH5</accession>
<evidence type="ECO:0000255" key="1">
    <source>
        <dbReference type="HAMAP-Rule" id="MF_01324"/>
    </source>
</evidence>
<evidence type="ECO:0000256" key="2">
    <source>
        <dbReference type="SAM" id="MobiDB-lite"/>
    </source>
</evidence>
<dbReference type="EC" id="2.7.7.6" evidence="1"/>
<dbReference type="EMBL" id="AP009377">
    <property type="protein sequence ID" value="BAG16686.1"/>
    <property type="molecule type" value="Genomic_DNA"/>
</dbReference>
<dbReference type="RefSeq" id="YP_001806688.1">
    <property type="nucleotide sequence ID" value="NC_010548.1"/>
</dbReference>
<dbReference type="SMR" id="B1VKH5"/>
<dbReference type="GeneID" id="6166560"/>
<dbReference type="KEGG" id="cjf:6166560"/>
<dbReference type="OrthoDB" id="498011at2759"/>
<dbReference type="GO" id="GO:0009507">
    <property type="term" value="C:chloroplast"/>
    <property type="evidence" value="ECO:0007669"/>
    <property type="project" value="UniProtKB-SubCell"/>
</dbReference>
<dbReference type="GO" id="GO:0000428">
    <property type="term" value="C:DNA-directed RNA polymerase complex"/>
    <property type="evidence" value="ECO:0007669"/>
    <property type="project" value="UniProtKB-KW"/>
</dbReference>
<dbReference type="GO" id="GO:0005739">
    <property type="term" value="C:mitochondrion"/>
    <property type="evidence" value="ECO:0007669"/>
    <property type="project" value="GOC"/>
</dbReference>
<dbReference type="GO" id="GO:0003677">
    <property type="term" value="F:DNA binding"/>
    <property type="evidence" value="ECO:0007669"/>
    <property type="project" value="UniProtKB-UniRule"/>
</dbReference>
<dbReference type="GO" id="GO:0003899">
    <property type="term" value="F:DNA-directed RNA polymerase activity"/>
    <property type="evidence" value="ECO:0007669"/>
    <property type="project" value="UniProtKB-UniRule"/>
</dbReference>
<dbReference type="GO" id="GO:0008270">
    <property type="term" value="F:zinc ion binding"/>
    <property type="evidence" value="ECO:0007669"/>
    <property type="project" value="UniProtKB-UniRule"/>
</dbReference>
<dbReference type="GO" id="GO:0006351">
    <property type="term" value="P:DNA-templated transcription"/>
    <property type="evidence" value="ECO:0007669"/>
    <property type="project" value="UniProtKB-UniRule"/>
</dbReference>
<dbReference type="CDD" id="cd02655">
    <property type="entry name" value="RNAP_beta'_C"/>
    <property type="match status" value="1"/>
</dbReference>
<dbReference type="Gene3D" id="1.10.132.30">
    <property type="match status" value="1"/>
</dbReference>
<dbReference type="Gene3D" id="1.10.150.390">
    <property type="match status" value="1"/>
</dbReference>
<dbReference type="Gene3D" id="1.10.1790.20">
    <property type="match status" value="1"/>
</dbReference>
<dbReference type="Gene3D" id="1.10.274.100">
    <property type="entry name" value="RNA polymerase Rpb1, domain 3"/>
    <property type="match status" value="1"/>
</dbReference>
<dbReference type="HAMAP" id="MF_01324">
    <property type="entry name" value="RNApol_bact_RpoC2"/>
    <property type="match status" value="1"/>
</dbReference>
<dbReference type="InterPro" id="IPR012756">
    <property type="entry name" value="DNA-dir_RpoC2_beta_pp"/>
</dbReference>
<dbReference type="InterPro" id="IPR050254">
    <property type="entry name" value="RNA_pol_beta''_euk"/>
</dbReference>
<dbReference type="InterPro" id="IPR042102">
    <property type="entry name" value="RNA_pol_Rpb1_3_sf"/>
</dbReference>
<dbReference type="InterPro" id="IPR007083">
    <property type="entry name" value="RNA_pol_Rpb1_4"/>
</dbReference>
<dbReference type="InterPro" id="IPR007081">
    <property type="entry name" value="RNA_pol_Rpb1_5"/>
</dbReference>
<dbReference type="InterPro" id="IPR038120">
    <property type="entry name" value="Rpb1_funnel_sf"/>
</dbReference>
<dbReference type="NCBIfam" id="TIGR02388">
    <property type="entry name" value="rpoC2_cyan"/>
    <property type="match status" value="1"/>
</dbReference>
<dbReference type="PANTHER" id="PTHR34995">
    <property type="entry name" value="DNA-DIRECTED RNA POLYMERASE SUBUNIT BETA"/>
    <property type="match status" value="1"/>
</dbReference>
<dbReference type="PANTHER" id="PTHR34995:SF1">
    <property type="entry name" value="DNA-DIRECTED RNA POLYMERASE SUBUNIT BETA"/>
    <property type="match status" value="1"/>
</dbReference>
<dbReference type="Pfam" id="PF05000">
    <property type="entry name" value="RNA_pol_Rpb1_4"/>
    <property type="match status" value="1"/>
</dbReference>
<dbReference type="Pfam" id="PF04998">
    <property type="entry name" value="RNA_pol_Rpb1_5"/>
    <property type="match status" value="2"/>
</dbReference>
<dbReference type="SUPFAM" id="SSF64484">
    <property type="entry name" value="beta and beta-prime subunits of DNA dependent RNA-polymerase"/>
    <property type="match status" value="1"/>
</dbReference>
<reference key="1">
    <citation type="journal article" date="2008" name="BMC Plant Biol.">
        <title>Complete nucleotide sequence of the Cryptomeria japonica D. Don. chloroplast genome and comparative chloroplast genomics: diversified genomic structure of coniferous species.</title>
        <authorList>
            <person name="Hirao T."/>
            <person name="Watanabe A."/>
            <person name="Kurita M."/>
            <person name="Kondo T."/>
            <person name="Takata K."/>
        </authorList>
    </citation>
    <scope>NUCLEOTIDE SEQUENCE [LARGE SCALE GENOMIC DNA]</scope>
</reference>
<sequence>MTQNPVKFVHPFPFEVPFFNKGMDKFVMKHLIRRFVNQFGMTYTSHILDQLKILGFQQATDAAISLGIDDLLTTPSKAWLIQDAQQRGFASERHHDYGNVHAVEKLRQLIEVWHATSEYLRREMNPNFRMTDPLNPVHMMSFSGARGSTSQVHQLVGMRGLMSDPRGKIVDLPIQGNFREGLSLTEYIISCYGARKGVVDTSIRTADAGYLTRRLVEVVQHLVVRKVDCGTIQGLFVNLIQDRETIKNKFVLQTLIGRVLADDVYIHGRCIATRNEDIGIKLANQLYYFQVQPIYIRTPFTCKSIYWICQLCYGRNTTHSNLIELGEAVGIIAGQSIGEPGTQLTLRTFHTGGVFTGDIAEHVRAPFTGKIEFNENLVYPTRTRHGHPAYICYNSLDVTINNQYEVQNLTIPPESLLFIQNNQLVESEQVIAEVRAKRSPFKEKVKKHIYSDLTGEMHRSIPMSNLILETTHLWVLSGSIYESVVVPFSSDQDQVDIPELLLDKHKSLSNYSVDQVKHESVDSNCFEKGKKILNYFETDRTIPNEHKDSIYSAILFENTHMSVKKEKNKLIVPLWCDKQWGKRRIPCPDFIFRIPRGQGILLNKKHIFAFLNDPRSKMIKYGNILGGYSIEKKRNSLENQLDGGPRLKIKKTYASLISVGTNEIIINMIQISLLKYPFFNIAKRENIASSPFLFHNKLGHTNLNDQSKLLSKGTIRSLPNENKKDESFTILSPSDFLQIVLFHDLKCLNTVKKLDANKKRIELSGLLGHLHSIANRFPYSHFMTYKKVLLTERSISNNDSNNFQLAKCYFMDEKREIYQFDSCRNIIFDFFNLNLYFCLSNFFEKTFSVVSLGQFCSESIWISEDKQLQGSGQIVVVHEESFVIRLAKPYLGARGATLNSYYGKILSQGDTLITMLYERLKSDDIIQGLPKVEQLSEARSNTSISKNRKKRFQKLNRYLAIFFGNFWGSFTSVRMTMEDSQNQLVDEIQKVYRSQGVQISDKHIEIIVRQITSKVLVVDVDRSENKNWENGLGSLFLPGELVGLSRVQRMDRALEKRINYRTILLGMTNASLNTQSFLSEASFQETAQVLAKSALQGRIDWLKGLKENVILGGMIPVGTGFNRLVKRSKMNSRTSQKSLFINKVEDFFFEHQDQALILSLKQKETSKNKKETSKNKKETSKNKKETSKNKKETSKNKKETSKNKKEASKNKK</sequence>
<name>RPOC2_CRYJA</name>
<gene>
    <name evidence="1" type="primary">rpoC2</name>
</gene>